<name>OBG_ERYLH</name>
<gene>
    <name evidence="1" type="primary">obg</name>
    <name type="ordered locus">ELI_01855</name>
</gene>
<keyword id="KW-0963">Cytoplasm</keyword>
<keyword id="KW-0342">GTP-binding</keyword>
<keyword id="KW-0378">Hydrolase</keyword>
<keyword id="KW-0460">Magnesium</keyword>
<keyword id="KW-0479">Metal-binding</keyword>
<keyword id="KW-0547">Nucleotide-binding</keyword>
<keyword id="KW-1185">Reference proteome</keyword>
<protein>
    <recommendedName>
        <fullName evidence="1">GTPase Obg</fullName>
        <ecNumber evidence="1">3.6.5.-</ecNumber>
    </recommendedName>
    <alternativeName>
        <fullName evidence="1">GTP-binding protein Obg</fullName>
    </alternativeName>
</protein>
<organism>
    <name type="scientific">Erythrobacter litoralis (strain HTCC2594)</name>
    <dbReference type="NCBI Taxonomy" id="314225"/>
    <lineage>
        <taxon>Bacteria</taxon>
        <taxon>Pseudomonadati</taxon>
        <taxon>Pseudomonadota</taxon>
        <taxon>Alphaproteobacteria</taxon>
        <taxon>Sphingomonadales</taxon>
        <taxon>Erythrobacteraceae</taxon>
        <taxon>Erythrobacter/Porphyrobacter group</taxon>
        <taxon>Erythrobacter</taxon>
    </lineage>
</organism>
<comment type="function">
    <text evidence="1">An essential GTPase which binds GTP, GDP and possibly (p)ppGpp with moderate affinity, with high nucleotide exchange rates and a fairly low GTP hydrolysis rate. Plays a role in control of the cell cycle, stress response, ribosome biogenesis and in those bacteria that undergo differentiation, in morphogenesis control.</text>
</comment>
<comment type="cofactor">
    <cofactor evidence="1">
        <name>Mg(2+)</name>
        <dbReference type="ChEBI" id="CHEBI:18420"/>
    </cofactor>
</comment>
<comment type="subunit">
    <text evidence="1">Monomer.</text>
</comment>
<comment type="subcellular location">
    <subcellularLocation>
        <location evidence="1">Cytoplasm</location>
    </subcellularLocation>
</comment>
<comment type="similarity">
    <text evidence="1">Belongs to the TRAFAC class OBG-HflX-like GTPase superfamily. OBG GTPase family.</text>
</comment>
<sequence>MHFLDQAKIYLKSGAGGPGAVSFRREKYIEYGGPDGGNGGKGGDIVFEAVQGLNTLIDFRYAQHFKAKRGAHGQGKDRTGAGAPDLVIKVPVGTQVLSEDKEEVLADFTEVGQRVTFLAGGMGGRGNASYKSSTNRAPRQHQPGQAGEEMWVWLRLKLLADVGLLGLPNAGKSTFINAVSNAKAKVGHYAFTTLVPKLGVVNHKGREFVLADIPGLIEGAAEGAGIGDRFLGHIERCRVLIHLVDISGEDPAEAFQTVNAELEAYGEGLEDKPQLVALNKLDLADEELVAGFAEELLEAGADEVFAVSGATGAGIEPLLDAVLGYLPDSTSTETKGSEVEEVDEEGGEWSPI</sequence>
<dbReference type="EC" id="3.6.5.-" evidence="1"/>
<dbReference type="EMBL" id="CP000157">
    <property type="protein sequence ID" value="ABC62463.1"/>
    <property type="molecule type" value="Genomic_DNA"/>
</dbReference>
<dbReference type="RefSeq" id="WP_011413339.1">
    <property type="nucleotide sequence ID" value="NC_007722.1"/>
</dbReference>
<dbReference type="SMR" id="Q2NCX8"/>
<dbReference type="STRING" id="314225.ELI_01855"/>
<dbReference type="KEGG" id="eli:ELI_01855"/>
<dbReference type="eggNOG" id="COG0536">
    <property type="taxonomic scope" value="Bacteria"/>
</dbReference>
<dbReference type="HOGENOM" id="CLU_011747_2_0_5"/>
<dbReference type="OrthoDB" id="9807318at2"/>
<dbReference type="Proteomes" id="UP000008808">
    <property type="component" value="Chromosome"/>
</dbReference>
<dbReference type="GO" id="GO:0005737">
    <property type="term" value="C:cytoplasm"/>
    <property type="evidence" value="ECO:0007669"/>
    <property type="project" value="UniProtKB-SubCell"/>
</dbReference>
<dbReference type="GO" id="GO:0005525">
    <property type="term" value="F:GTP binding"/>
    <property type="evidence" value="ECO:0007669"/>
    <property type="project" value="UniProtKB-UniRule"/>
</dbReference>
<dbReference type="GO" id="GO:0003924">
    <property type="term" value="F:GTPase activity"/>
    <property type="evidence" value="ECO:0007669"/>
    <property type="project" value="UniProtKB-UniRule"/>
</dbReference>
<dbReference type="GO" id="GO:0000287">
    <property type="term" value="F:magnesium ion binding"/>
    <property type="evidence" value="ECO:0007669"/>
    <property type="project" value="InterPro"/>
</dbReference>
<dbReference type="GO" id="GO:0042254">
    <property type="term" value="P:ribosome biogenesis"/>
    <property type="evidence" value="ECO:0007669"/>
    <property type="project" value="UniProtKB-UniRule"/>
</dbReference>
<dbReference type="CDD" id="cd01898">
    <property type="entry name" value="Obg"/>
    <property type="match status" value="1"/>
</dbReference>
<dbReference type="FunFam" id="2.70.210.12:FF:000001">
    <property type="entry name" value="GTPase Obg"/>
    <property type="match status" value="1"/>
</dbReference>
<dbReference type="Gene3D" id="2.70.210.12">
    <property type="entry name" value="GTP1/OBG domain"/>
    <property type="match status" value="1"/>
</dbReference>
<dbReference type="Gene3D" id="3.40.50.300">
    <property type="entry name" value="P-loop containing nucleotide triphosphate hydrolases"/>
    <property type="match status" value="1"/>
</dbReference>
<dbReference type="HAMAP" id="MF_01454">
    <property type="entry name" value="GTPase_Obg"/>
    <property type="match status" value="1"/>
</dbReference>
<dbReference type="InterPro" id="IPR031167">
    <property type="entry name" value="G_OBG"/>
</dbReference>
<dbReference type="InterPro" id="IPR006073">
    <property type="entry name" value="GTP-bd"/>
</dbReference>
<dbReference type="InterPro" id="IPR014100">
    <property type="entry name" value="GTP-bd_Obg/CgtA"/>
</dbReference>
<dbReference type="InterPro" id="IPR006074">
    <property type="entry name" value="GTP1-OBG_CS"/>
</dbReference>
<dbReference type="InterPro" id="IPR006169">
    <property type="entry name" value="GTP1_OBG_dom"/>
</dbReference>
<dbReference type="InterPro" id="IPR036726">
    <property type="entry name" value="GTP1_OBG_dom_sf"/>
</dbReference>
<dbReference type="InterPro" id="IPR045086">
    <property type="entry name" value="OBG_GTPase"/>
</dbReference>
<dbReference type="InterPro" id="IPR027417">
    <property type="entry name" value="P-loop_NTPase"/>
</dbReference>
<dbReference type="NCBIfam" id="TIGR02729">
    <property type="entry name" value="Obg_CgtA"/>
    <property type="match status" value="1"/>
</dbReference>
<dbReference type="NCBIfam" id="NF008955">
    <property type="entry name" value="PRK12297.1"/>
    <property type="match status" value="1"/>
</dbReference>
<dbReference type="NCBIfam" id="NF008956">
    <property type="entry name" value="PRK12299.1"/>
    <property type="match status" value="1"/>
</dbReference>
<dbReference type="PANTHER" id="PTHR11702">
    <property type="entry name" value="DEVELOPMENTALLY REGULATED GTP-BINDING PROTEIN-RELATED"/>
    <property type="match status" value="1"/>
</dbReference>
<dbReference type="PANTHER" id="PTHR11702:SF31">
    <property type="entry name" value="MITOCHONDRIAL RIBOSOME-ASSOCIATED GTPASE 2"/>
    <property type="match status" value="1"/>
</dbReference>
<dbReference type="Pfam" id="PF01018">
    <property type="entry name" value="GTP1_OBG"/>
    <property type="match status" value="1"/>
</dbReference>
<dbReference type="Pfam" id="PF01926">
    <property type="entry name" value="MMR_HSR1"/>
    <property type="match status" value="1"/>
</dbReference>
<dbReference type="PIRSF" id="PIRSF002401">
    <property type="entry name" value="GTP_bd_Obg/CgtA"/>
    <property type="match status" value="1"/>
</dbReference>
<dbReference type="PRINTS" id="PR00326">
    <property type="entry name" value="GTP1OBG"/>
</dbReference>
<dbReference type="SUPFAM" id="SSF82051">
    <property type="entry name" value="Obg GTP-binding protein N-terminal domain"/>
    <property type="match status" value="1"/>
</dbReference>
<dbReference type="SUPFAM" id="SSF52540">
    <property type="entry name" value="P-loop containing nucleoside triphosphate hydrolases"/>
    <property type="match status" value="1"/>
</dbReference>
<dbReference type="PROSITE" id="PS51710">
    <property type="entry name" value="G_OBG"/>
    <property type="match status" value="1"/>
</dbReference>
<dbReference type="PROSITE" id="PS00905">
    <property type="entry name" value="GTP1_OBG"/>
    <property type="match status" value="1"/>
</dbReference>
<dbReference type="PROSITE" id="PS51883">
    <property type="entry name" value="OBG"/>
    <property type="match status" value="1"/>
</dbReference>
<reference key="1">
    <citation type="journal article" date="2009" name="J. Bacteriol.">
        <title>Complete genome sequence of Erythrobacter litoralis HTCC2594.</title>
        <authorList>
            <person name="Oh H.M."/>
            <person name="Giovannoni S.J."/>
            <person name="Ferriera S."/>
            <person name="Johnson J."/>
            <person name="Cho J.C."/>
        </authorList>
    </citation>
    <scope>NUCLEOTIDE SEQUENCE [LARGE SCALE GENOMIC DNA]</scope>
    <source>
        <strain>HTCC2594</strain>
    </source>
</reference>
<accession>Q2NCX8</accession>
<evidence type="ECO:0000255" key="1">
    <source>
        <dbReference type="HAMAP-Rule" id="MF_01454"/>
    </source>
</evidence>
<evidence type="ECO:0000255" key="2">
    <source>
        <dbReference type="PROSITE-ProRule" id="PRU01231"/>
    </source>
</evidence>
<evidence type="ECO:0000256" key="3">
    <source>
        <dbReference type="SAM" id="MobiDB-lite"/>
    </source>
</evidence>
<proteinExistence type="inferred from homology"/>
<feature type="chain" id="PRO_0000385909" description="GTPase Obg">
    <location>
        <begin position="1"/>
        <end position="352"/>
    </location>
</feature>
<feature type="domain" description="Obg" evidence="2">
    <location>
        <begin position="1"/>
        <end position="159"/>
    </location>
</feature>
<feature type="domain" description="OBG-type G" evidence="1">
    <location>
        <begin position="160"/>
        <end position="327"/>
    </location>
</feature>
<feature type="region of interest" description="Disordered" evidence="3">
    <location>
        <begin position="329"/>
        <end position="352"/>
    </location>
</feature>
<feature type="compositionally biased region" description="Acidic residues" evidence="3">
    <location>
        <begin position="339"/>
        <end position="352"/>
    </location>
</feature>
<feature type="binding site" evidence="1">
    <location>
        <begin position="166"/>
        <end position="173"/>
    </location>
    <ligand>
        <name>GTP</name>
        <dbReference type="ChEBI" id="CHEBI:37565"/>
    </ligand>
</feature>
<feature type="binding site" evidence="1">
    <location>
        <position position="173"/>
    </location>
    <ligand>
        <name>Mg(2+)</name>
        <dbReference type="ChEBI" id="CHEBI:18420"/>
    </ligand>
</feature>
<feature type="binding site" evidence="1">
    <location>
        <begin position="191"/>
        <end position="195"/>
    </location>
    <ligand>
        <name>GTP</name>
        <dbReference type="ChEBI" id="CHEBI:37565"/>
    </ligand>
</feature>
<feature type="binding site" evidence="1">
    <location>
        <position position="193"/>
    </location>
    <ligand>
        <name>Mg(2+)</name>
        <dbReference type="ChEBI" id="CHEBI:18420"/>
    </ligand>
</feature>
<feature type="binding site" evidence="1">
    <location>
        <begin position="212"/>
        <end position="215"/>
    </location>
    <ligand>
        <name>GTP</name>
        <dbReference type="ChEBI" id="CHEBI:37565"/>
    </ligand>
</feature>
<feature type="binding site" evidence="1">
    <location>
        <begin position="279"/>
        <end position="282"/>
    </location>
    <ligand>
        <name>GTP</name>
        <dbReference type="ChEBI" id="CHEBI:37565"/>
    </ligand>
</feature>
<feature type="binding site" evidence="1">
    <location>
        <begin position="308"/>
        <end position="310"/>
    </location>
    <ligand>
        <name>GTP</name>
        <dbReference type="ChEBI" id="CHEBI:37565"/>
    </ligand>
</feature>